<organism>
    <name type="scientific">Salmonella typhimurium (strain LT2 / SGSC1412 / ATCC 700720)</name>
    <dbReference type="NCBI Taxonomy" id="99287"/>
    <lineage>
        <taxon>Bacteria</taxon>
        <taxon>Pseudomonadati</taxon>
        <taxon>Pseudomonadota</taxon>
        <taxon>Gammaproteobacteria</taxon>
        <taxon>Enterobacterales</taxon>
        <taxon>Enterobacteriaceae</taxon>
        <taxon>Salmonella</taxon>
    </lineage>
</organism>
<evidence type="ECO:0000255" key="1">
    <source>
        <dbReference type="HAMAP-Rule" id="MF_01049"/>
    </source>
</evidence>
<feature type="chain" id="PRO_0000201491" description="L-carnitine/gamma-butyrobetaine antiporter">
    <location>
        <begin position="1"/>
        <end position="505"/>
    </location>
</feature>
<feature type="transmembrane region" description="Helical" evidence="1">
    <location>
        <begin position="10"/>
        <end position="30"/>
    </location>
</feature>
<feature type="transmembrane region" description="Helical" evidence="1">
    <location>
        <begin position="51"/>
        <end position="71"/>
    </location>
</feature>
<feature type="transmembrane region" description="Helical" evidence="1">
    <location>
        <begin position="92"/>
        <end position="112"/>
    </location>
</feature>
<feature type="transmembrane region" description="Helical" evidence="1">
    <location>
        <begin position="143"/>
        <end position="163"/>
    </location>
</feature>
<feature type="transmembrane region" description="Helical" evidence="1">
    <location>
        <begin position="195"/>
        <end position="215"/>
    </location>
</feature>
<feature type="transmembrane region" description="Helical" evidence="1">
    <location>
        <begin position="231"/>
        <end position="251"/>
    </location>
</feature>
<feature type="transmembrane region" description="Helical" evidence="1">
    <location>
        <begin position="263"/>
        <end position="283"/>
    </location>
</feature>
<feature type="transmembrane region" description="Helical" evidence="1">
    <location>
        <begin position="316"/>
        <end position="336"/>
    </location>
</feature>
<feature type="transmembrane region" description="Helical" evidence="1">
    <location>
        <begin position="347"/>
        <end position="367"/>
    </location>
</feature>
<feature type="transmembrane region" description="Helical" evidence="1">
    <location>
        <begin position="403"/>
        <end position="423"/>
    </location>
</feature>
<feature type="transmembrane region" description="Helical" evidence="1">
    <location>
        <begin position="446"/>
        <end position="466"/>
    </location>
</feature>
<feature type="transmembrane region" description="Helical" evidence="1">
    <location>
        <begin position="475"/>
        <end position="495"/>
    </location>
</feature>
<comment type="function">
    <text evidence="1">Catalyzes the exchange of L-carnitine for gamma-butyrobetaine.</text>
</comment>
<comment type="catalytic activity">
    <reaction evidence="1">
        <text>4-(trimethylamino)butanoate(in) + (R)-carnitine(out) = 4-(trimethylamino)butanoate(out) + (R)-carnitine(in)</text>
        <dbReference type="Rhea" id="RHEA:29427"/>
        <dbReference type="ChEBI" id="CHEBI:16244"/>
        <dbReference type="ChEBI" id="CHEBI:16347"/>
    </reaction>
</comment>
<comment type="pathway">
    <text evidence="1">Amine and polyamine metabolism; carnitine metabolism.</text>
</comment>
<comment type="subunit">
    <text evidence="1">Homotrimer.</text>
</comment>
<comment type="subcellular location">
    <subcellularLocation>
        <location evidence="1">Cell inner membrane</location>
        <topology evidence="1">Multi-pass membrane protein</topology>
    </subcellularLocation>
</comment>
<comment type="similarity">
    <text evidence="1">Belongs to the BCCT transporter (TC 2.A.15) family. CaiT subfamily.</text>
</comment>
<keyword id="KW-0050">Antiport</keyword>
<keyword id="KW-0997">Cell inner membrane</keyword>
<keyword id="KW-1003">Cell membrane</keyword>
<keyword id="KW-0472">Membrane</keyword>
<keyword id="KW-1185">Reference proteome</keyword>
<keyword id="KW-0812">Transmembrane</keyword>
<keyword id="KW-1133">Transmembrane helix</keyword>
<keyword id="KW-0813">Transport</keyword>
<reference key="1">
    <citation type="journal article" date="2001" name="Nature">
        <title>Complete genome sequence of Salmonella enterica serovar Typhimurium LT2.</title>
        <authorList>
            <person name="McClelland M."/>
            <person name="Sanderson K.E."/>
            <person name="Spieth J."/>
            <person name="Clifton S.W."/>
            <person name="Latreille P."/>
            <person name="Courtney L."/>
            <person name="Porwollik S."/>
            <person name="Ali J."/>
            <person name="Dante M."/>
            <person name="Du F."/>
            <person name="Hou S."/>
            <person name="Layman D."/>
            <person name="Leonard S."/>
            <person name="Nguyen C."/>
            <person name="Scott K."/>
            <person name="Holmes A."/>
            <person name="Grewal N."/>
            <person name="Mulvaney E."/>
            <person name="Ryan E."/>
            <person name="Sun H."/>
            <person name="Florea L."/>
            <person name="Miller W."/>
            <person name="Stoneking T."/>
            <person name="Nhan M."/>
            <person name="Waterston R."/>
            <person name="Wilson R.K."/>
        </authorList>
    </citation>
    <scope>NUCLEOTIDE SEQUENCE [LARGE SCALE GENOMIC DNA]</scope>
    <source>
        <strain>LT2 / SGSC1412 / ATCC 700720</strain>
    </source>
</reference>
<name>CAIT_SALTY</name>
<gene>
    <name evidence="1" type="primary">caiT</name>
    <name type="ordered locus">STM0074</name>
</gene>
<protein>
    <recommendedName>
        <fullName evidence="1">L-carnitine/gamma-butyrobetaine antiporter</fullName>
    </recommendedName>
</protein>
<sequence>MKNEKKKSGIEPKVFFPPLIIVGILCWLTVRDLDAANVVINAVFSYVTNVWGWAFEWYMVVMLFGWFWLVFGPYAKKRLGDEKPEFSTASWIFMMFASCTSAAVLFWGSIEIYYYISTPPFGLEPNSTGAKEIGLAYSLFHWGPLPWATYSFLSVAFAYFFFVRKMDVIRPSSTLVPLVGEKHAKGLFGTIVDNFYLVALIFAMGTSLGLATPLVTECMQWLFGIPHTLQLDAIIITCWIILNAICVACGLQKGVRIASDVRSYLSFLMLGWVFIVSGASFIMNYFTDSVGMLLMHLPRMLFYTDAIGKGGFPQGWTVFYWAWWVIYAIQMSIFLARISRGRTVRELCFGMVMGLTASTWILWTVLGSNTLLLMDKNILNIPQLIEQHGVARAIIETWAALPLSTATMWGFFILCFIATVTLINACSYTLAMSTCREVRDGEEPPLLVRIGWSVLVGIIGIVLLALGGLKPIQTAIIAGGCPLFFVNIMVTLSFIKDAKVHWKDK</sequence>
<dbReference type="EMBL" id="AE006468">
    <property type="protein sequence ID" value="AAL19038.1"/>
    <property type="molecule type" value="Genomic_DNA"/>
</dbReference>
<dbReference type="RefSeq" id="NP_459079.1">
    <property type="nucleotide sequence ID" value="NC_003197.2"/>
</dbReference>
<dbReference type="RefSeq" id="WP_000787073.1">
    <property type="nucleotide sequence ID" value="NC_003197.2"/>
</dbReference>
<dbReference type="SMR" id="Q8ZRX1"/>
<dbReference type="STRING" id="99287.STM0074"/>
<dbReference type="PaxDb" id="99287-STM0074"/>
<dbReference type="GeneID" id="1251592"/>
<dbReference type="KEGG" id="stm:STM0074"/>
<dbReference type="PATRIC" id="fig|99287.12.peg.76"/>
<dbReference type="HOGENOM" id="CLU_010118_6_0_6"/>
<dbReference type="PhylomeDB" id="Q8ZRX1"/>
<dbReference type="BioCyc" id="SENT99287:STM0074-MONOMER"/>
<dbReference type="UniPathway" id="UPA00117"/>
<dbReference type="Proteomes" id="UP000001014">
    <property type="component" value="Chromosome"/>
</dbReference>
<dbReference type="GO" id="GO:0005886">
    <property type="term" value="C:plasma membrane"/>
    <property type="evidence" value="ECO:0000318"/>
    <property type="project" value="GO_Central"/>
</dbReference>
<dbReference type="GO" id="GO:0044667">
    <property type="term" value="F:(R)-carnitine:4-(trimethylammonio)butanoate antiporter activity"/>
    <property type="evidence" value="ECO:0007669"/>
    <property type="project" value="UniProtKB-UniRule"/>
</dbReference>
<dbReference type="GO" id="GO:0022857">
    <property type="term" value="F:transmembrane transporter activity"/>
    <property type="evidence" value="ECO:0000318"/>
    <property type="project" value="GO_Central"/>
</dbReference>
<dbReference type="GO" id="GO:1900751">
    <property type="term" value="P:4-(trimethylammonio)butanoate transport"/>
    <property type="evidence" value="ECO:0007669"/>
    <property type="project" value="InterPro"/>
</dbReference>
<dbReference type="GO" id="GO:0009437">
    <property type="term" value="P:carnitine metabolic process"/>
    <property type="evidence" value="ECO:0007669"/>
    <property type="project" value="UniProtKB-UniRule"/>
</dbReference>
<dbReference type="HAMAP" id="MF_01049">
    <property type="entry name" value="CaiT"/>
    <property type="match status" value="1"/>
</dbReference>
<dbReference type="InterPro" id="IPR018093">
    <property type="entry name" value="BCCT_CS"/>
</dbReference>
<dbReference type="InterPro" id="IPR000060">
    <property type="entry name" value="BCCT_transptr"/>
</dbReference>
<dbReference type="InterPro" id="IPR023449">
    <property type="entry name" value="BCCT_transptr_CaiT"/>
</dbReference>
<dbReference type="NCBIfam" id="TIGR00842">
    <property type="entry name" value="bcct"/>
    <property type="match status" value="1"/>
</dbReference>
<dbReference type="NCBIfam" id="NF002887">
    <property type="entry name" value="PRK03356.1"/>
    <property type="match status" value="1"/>
</dbReference>
<dbReference type="PANTHER" id="PTHR30047">
    <property type="entry name" value="HIGH-AFFINITY CHOLINE TRANSPORT PROTEIN-RELATED"/>
    <property type="match status" value="1"/>
</dbReference>
<dbReference type="PANTHER" id="PTHR30047:SF11">
    <property type="entry name" value="L-CARNITINE_GAMMA-BUTYROBETAINE ANTIPORTER"/>
    <property type="match status" value="1"/>
</dbReference>
<dbReference type="Pfam" id="PF02028">
    <property type="entry name" value="BCCT"/>
    <property type="match status" value="1"/>
</dbReference>
<dbReference type="PROSITE" id="PS01303">
    <property type="entry name" value="BCCT"/>
    <property type="match status" value="1"/>
</dbReference>
<accession>Q8ZRX1</accession>
<proteinExistence type="inferred from homology"/>